<organism>
    <name type="scientific">Haemophilus influenzae (strain ATCC 51907 / DSM 11121 / KW20 / Rd)</name>
    <dbReference type="NCBI Taxonomy" id="71421"/>
    <lineage>
        <taxon>Bacteria</taxon>
        <taxon>Pseudomonadati</taxon>
        <taxon>Pseudomonadota</taxon>
        <taxon>Gammaproteobacteria</taxon>
        <taxon>Pasteurellales</taxon>
        <taxon>Pasteurellaceae</taxon>
        <taxon>Haemophilus</taxon>
    </lineage>
</organism>
<gene>
    <name type="primary">hxuC</name>
    <name type="ordered locus">HI_0262</name>
</gene>
<proteinExistence type="evidence at protein level"/>
<sequence>MRFSKLSLAITTTLVTANALAQSVELDSINVIATRDPSRFAYTPEKQSKDSLLSKQATSVADALEDIPNVDVRGGSRSIAQKPNIRGLSDNRVVQVIDGVRQNFDLAHRGSYFLPMSLIQEIEVIKGPSSSLWGSGALGGVVAMRTPNALDLLKNNDKFGVKIRQGYQTANNLSEKDVSVFAANDKFDVLISGFYNNADNLRTGKGNKLNNTAYKQFGGLAKFGWQINDANRVELSHRETRFKQTAPSNNEVENELTNEQITDQIKKFHGQKDDLLPPTTQPSPSERSEFYSKVKTRLGSVSYLTDQQIPDQSTVFNYYLTPDNPYLNTHIALYNNKTIEKEQRKVSGVKDQTKLTTRGINLRNSSELSHISFVYGVDYMRDKIRTERGTNGSDAKFRADPYNANSNTTGVYLIAHIPLFGEKLLVSPSVRYDHYDTSSKTVKYKDNHLSPATKLTWIVTNWLDFTAKYNEAFRAPSMQERFVSGAHFGANTLGLDHINRFVANPNLRPETAKNKEITANLHFDSLFKQGDKFKIEATYFRNDVKDFINLKIFNDAKTSASAGANPNTNGALLPKNSQYQNITNARLSGIELQAQYQTERLTLFTNYGSTKGKDKDSGEALSNIAASKIGVGVNYALVKDKFTVGATVTHYAAQRRVPKDHSVTYPSYILTDLRATYAPLKGEWKNLRLDFALENLFDRKYQPAFSLMEGTGRNAKISAVYSF</sequence>
<feature type="signal peptide" evidence="2">
    <location>
        <begin position="1"/>
        <end position="21"/>
    </location>
</feature>
<feature type="chain" id="PRO_0000034792" description="Heme/hemopexin utilization protein C">
    <location>
        <begin position="22"/>
        <end position="723"/>
    </location>
</feature>
<feature type="domain" description="TBDR plug" evidence="3">
    <location>
        <begin position="36"/>
        <end position="147"/>
    </location>
</feature>
<feature type="domain" description="TBDR beta-barrel" evidence="3">
    <location>
        <begin position="158"/>
        <end position="723"/>
    </location>
</feature>
<feature type="short sequence motif" description="TonB C-terminal box">
    <location>
        <begin position="706"/>
        <end position="723"/>
    </location>
</feature>
<name>HXUC1_HAEIN</name>
<protein>
    <recommendedName>
        <fullName>Heme/hemopexin utilization protein C</fullName>
    </recommendedName>
</protein>
<keyword id="KW-0998">Cell outer membrane</keyword>
<keyword id="KW-0472">Membrane</keyword>
<keyword id="KW-1185">Reference proteome</keyword>
<keyword id="KW-0732">Signal</keyword>
<keyword id="KW-0798">TonB box</keyword>
<keyword id="KW-0812">Transmembrane</keyword>
<keyword id="KW-1134">Transmembrane beta strand</keyword>
<keyword id="KW-0813">Transport</keyword>
<comment type="function">
    <text evidence="1">Required for utilization of free heme at low concentrations.</text>
</comment>
<comment type="subcellular location">
    <subcellularLocation>
        <location evidence="3">Cell outer membrane</location>
        <topology evidence="3">Multi-pass membrane protein</topology>
    </subcellularLocation>
</comment>
<comment type="similarity">
    <text evidence="4">Belongs to the TonB-dependent receptor family.</text>
</comment>
<reference key="1">
    <citation type="journal article" date="1995" name="Science">
        <title>Whole-genome random sequencing and assembly of Haemophilus influenzae Rd.</title>
        <authorList>
            <person name="Fleischmann R.D."/>
            <person name="Adams M.D."/>
            <person name="White O."/>
            <person name="Clayton R.A."/>
            <person name="Kirkness E.F."/>
            <person name="Kerlavage A.R."/>
            <person name="Bult C.J."/>
            <person name="Tomb J.-F."/>
            <person name="Dougherty B.A."/>
            <person name="Merrick J.M."/>
            <person name="McKenney K."/>
            <person name="Sutton G.G."/>
            <person name="FitzHugh W."/>
            <person name="Fields C.A."/>
            <person name="Gocayne J.D."/>
            <person name="Scott J.D."/>
            <person name="Shirley R."/>
            <person name="Liu L.-I."/>
            <person name="Glodek A."/>
            <person name="Kelley J.M."/>
            <person name="Weidman J.F."/>
            <person name="Phillips C.A."/>
            <person name="Spriggs T."/>
            <person name="Hedblom E."/>
            <person name="Cotton M.D."/>
            <person name="Utterback T.R."/>
            <person name="Hanna M.C."/>
            <person name="Nguyen D.T."/>
            <person name="Saudek D.M."/>
            <person name="Brandon R.C."/>
            <person name="Fine L.D."/>
            <person name="Fritchman J.L."/>
            <person name="Fuhrmann J.L."/>
            <person name="Geoghagen N.S.M."/>
            <person name="Gnehm C.L."/>
            <person name="McDonald L.A."/>
            <person name="Small K.V."/>
            <person name="Fraser C.M."/>
            <person name="Smith H.O."/>
            <person name="Venter J.C."/>
        </authorList>
    </citation>
    <scope>NUCLEOTIDE SEQUENCE [LARGE SCALE GENOMIC DNA]</scope>
    <source>
        <strain>ATCC 51907 / DSM 11121 / KW20 / Rd</strain>
    </source>
</reference>
<reference key="2">
    <citation type="journal article" date="2000" name="Electrophoresis">
        <title>Two-dimensional map of the proteome of Haemophilus influenzae.</title>
        <authorList>
            <person name="Langen H."/>
            <person name="Takacs B."/>
            <person name="Evers S."/>
            <person name="Berndt P."/>
            <person name="Lahm H.W."/>
            <person name="Wipf B."/>
            <person name="Gray C."/>
            <person name="Fountoulakis M."/>
        </authorList>
    </citation>
    <scope>IDENTIFICATION BY MASS SPECTROMETRY</scope>
    <source>
        <strain>ATCC 51907 / DSM 11121 / KW20 / Rd</strain>
    </source>
</reference>
<accession>P44600</accession>
<dbReference type="EMBL" id="L42023">
    <property type="protein sequence ID" value="AAC21927.1"/>
    <property type="molecule type" value="Genomic_DNA"/>
</dbReference>
<dbReference type="PIR" id="C64058">
    <property type="entry name" value="C64058"/>
</dbReference>
<dbReference type="RefSeq" id="NP_438431.1">
    <property type="nucleotide sequence ID" value="NC_000907.1"/>
</dbReference>
<dbReference type="SMR" id="P44600"/>
<dbReference type="STRING" id="71421.HI_0262"/>
<dbReference type="TCDB" id="1.B.14.2.11">
    <property type="family name" value="the outer membrane receptor (omr) family"/>
</dbReference>
<dbReference type="EnsemblBacteria" id="AAC21927">
    <property type="protein sequence ID" value="AAC21927"/>
    <property type="gene ID" value="HI_0262"/>
</dbReference>
<dbReference type="KEGG" id="hin:HI_0262"/>
<dbReference type="PATRIC" id="fig|71421.8.peg.277"/>
<dbReference type="eggNOG" id="COG4771">
    <property type="taxonomic scope" value="Bacteria"/>
</dbReference>
<dbReference type="HOGENOM" id="CLU_008287_19_3_6"/>
<dbReference type="OrthoDB" id="9764669at2"/>
<dbReference type="PhylomeDB" id="P44600"/>
<dbReference type="BioCyc" id="HINF71421:G1GJ1-277-MONOMER"/>
<dbReference type="Proteomes" id="UP000000579">
    <property type="component" value="Chromosome"/>
</dbReference>
<dbReference type="GO" id="GO:0009279">
    <property type="term" value="C:cell outer membrane"/>
    <property type="evidence" value="ECO:0000318"/>
    <property type="project" value="GO_Central"/>
</dbReference>
<dbReference type="GO" id="GO:0015232">
    <property type="term" value="F:heme transmembrane transporter activity"/>
    <property type="evidence" value="ECO:0007669"/>
    <property type="project" value="InterPro"/>
</dbReference>
<dbReference type="GO" id="GO:0015344">
    <property type="term" value="F:siderophore uptake transmembrane transporter activity"/>
    <property type="evidence" value="ECO:0000318"/>
    <property type="project" value="GO_Central"/>
</dbReference>
<dbReference type="GO" id="GO:0044718">
    <property type="term" value="P:siderophore transmembrane transport"/>
    <property type="evidence" value="ECO:0000318"/>
    <property type="project" value="GO_Central"/>
</dbReference>
<dbReference type="CDD" id="cd01347">
    <property type="entry name" value="ligand_gated_channel"/>
    <property type="match status" value="1"/>
</dbReference>
<dbReference type="Gene3D" id="2.40.170.20">
    <property type="entry name" value="TonB-dependent receptor, beta-barrel domain"/>
    <property type="match status" value="1"/>
</dbReference>
<dbReference type="Gene3D" id="2.170.130.10">
    <property type="entry name" value="TonB-dependent receptor, plug domain"/>
    <property type="match status" value="1"/>
</dbReference>
<dbReference type="InterPro" id="IPR012910">
    <property type="entry name" value="Plug_dom"/>
</dbReference>
<dbReference type="InterPro" id="IPR037066">
    <property type="entry name" value="Plug_dom_sf"/>
</dbReference>
<dbReference type="InterPro" id="IPR039426">
    <property type="entry name" value="TonB-dep_rcpt-like"/>
</dbReference>
<dbReference type="InterPro" id="IPR000531">
    <property type="entry name" value="TonB-dep_rcpt_b-brl"/>
</dbReference>
<dbReference type="InterPro" id="IPR011276">
    <property type="entry name" value="TonB_haem/Hb_rcpt"/>
</dbReference>
<dbReference type="InterPro" id="IPR010949">
    <property type="entry name" value="TonB_Hb/transfer/lactofer_rcpt"/>
</dbReference>
<dbReference type="InterPro" id="IPR036942">
    <property type="entry name" value="TonB_rcpt_b-brl_sf"/>
</dbReference>
<dbReference type="InterPro" id="IPR010917">
    <property type="entry name" value="TonB_rcpt_CS"/>
</dbReference>
<dbReference type="NCBIfam" id="TIGR01785">
    <property type="entry name" value="TonB-hemin"/>
    <property type="match status" value="1"/>
</dbReference>
<dbReference type="NCBIfam" id="TIGR01786">
    <property type="entry name" value="TonB-hemlactrns"/>
    <property type="match status" value="1"/>
</dbReference>
<dbReference type="PANTHER" id="PTHR30069:SF41">
    <property type="entry name" value="HEME_HEMOPEXIN UTILIZATION PROTEIN C"/>
    <property type="match status" value="1"/>
</dbReference>
<dbReference type="PANTHER" id="PTHR30069">
    <property type="entry name" value="TONB-DEPENDENT OUTER MEMBRANE RECEPTOR"/>
    <property type="match status" value="1"/>
</dbReference>
<dbReference type="Pfam" id="PF07715">
    <property type="entry name" value="Plug"/>
    <property type="match status" value="1"/>
</dbReference>
<dbReference type="Pfam" id="PF00593">
    <property type="entry name" value="TonB_dep_Rec_b-barrel"/>
    <property type="match status" value="1"/>
</dbReference>
<dbReference type="SUPFAM" id="SSF56935">
    <property type="entry name" value="Porins"/>
    <property type="match status" value="1"/>
</dbReference>
<dbReference type="PROSITE" id="PS01156">
    <property type="entry name" value="TONB_DEPENDENT_REC_2"/>
    <property type="match status" value="1"/>
</dbReference>
<dbReference type="PROSITE" id="PS52016">
    <property type="entry name" value="TONB_DEPENDENT_REC_3"/>
    <property type="match status" value="1"/>
</dbReference>
<evidence type="ECO:0000250" key="1"/>
<evidence type="ECO:0000255" key="2"/>
<evidence type="ECO:0000255" key="3">
    <source>
        <dbReference type="PROSITE-ProRule" id="PRU01360"/>
    </source>
</evidence>
<evidence type="ECO:0000305" key="4"/>